<feature type="chain" id="PRO_0000091516" description="Tetracycline resistance protein TetW">
    <location>
        <begin position="1"/>
        <end position="639"/>
    </location>
</feature>
<feature type="domain" description="tr-type G" evidence="2">
    <location>
        <begin position="1"/>
        <end position="243"/>
    </location>
</feature>
<feature type="binding site" evidence="1">
    <location>
        <begin position="10"/>
        <end position="17"/>
    </location>
    <ligand>
        <name>GTP</name>
        <dbReference type="ChEBI" id="CHEBI:37565"/>
    </ligand>
</feature>
<feature type="binding site" evidence="1">
    <location>
        <begin position="74"/>
        <end position="78"/>
    </location>
    <ligand>
        <name>GTP</name>
        <dbReference type="ChEBI" id="CHEBI:37565"/>
    </ligand>
</feature>
<feature type="binding site" evidence="1">
    <location>
        <begin position="128"/>
        <end position="131"/>
    </location>
    <ligand>
        <name>GTP</name>
        <dbReference type="ChEBI" id="CHEBI:37565"/>
    </ligand>
</feature>
<sequence>MKIINIGILAHVDAGKTTLTESLLYASGAISEPGSVEKGTTRTDTMFLERQRGITIQAAVTSFQWHRCKVNIVDTPGHMDFLAEVYRSLAVLDGAILVISAKDGVQAQTRILFHALRKMNIPTVIFINKIDQAGVDLQSVVQSVRDKLSADIIIKQTVSLSPEIVLEENTDIEAWDAVIENNDELLEKYIAGEPISREKLAREEQQRVQDASLFPVYHGSAKNGLGIQPLMDAVTGLFQPIGEQGGAALCGSVFKVEYTDCGQRRVYLRLYSGTLRLRDTVALAGREKLKITEMRIPSKGEIVRTDTAYQGEIVILPSDSVRLNDVLGDQTRLPRKRWREDPLPMLRTTIAPKTAAQRERLLDALTQLADTDPLLRCEVDSITHEIILSFLGRVQLEVVSALLSEKYKLETVVKEPSVIYMERPLKAASHTIHIEVPPNPFWASIGLSVTPLSLGSGVQYESRVSLGYLNQSFQNAVRDGIRYGLEQGLFGWNVTDCKICFEYGLYYSPVSTPADFRSLAPIVLEQALKESGTQLLEPYLSFILYAPQEYLSRAYHDAPKYCATIETAQVKKDEVVFTGEIPARCIQAYRTDLAFYTNGRSVCLTELKGYQAAVGQPVIQPRRPNSRLDKVRHMFQKVM</sequence>
<comment type="function">
    <text>Abolishes the inhibitory effect of tetracyclin on protein synthesis by a non-covalent modification of the ribosomes.</text>
</comment>
<comment type="similarity">
    <text evidence="2">Belongs to the TRAFAC class translation factor GTPase superfamily. Classic translation factor GTPase family. TetM/TetO subfamily.</text>
</comment>
<accession>O52836</accession>
<protein>
    <recommendedName>
        <fullName>Tetracycline resistance protein TetW</fullName>
        <shortName>Tet(W)</shortName>
    </recommendedName>
</protein>
<keyword id="KW-0046">Antibiotic resistance</keyword>
<keyword id="KW-0342">GTP-binding</keyword>
<keyword id="KW-0547">Nucleotide-binding</keyword>
<keyword id="KW-0648">Protein biosynthesis</keyword>
<name>TETW_BUTFI</name>
<organism>
    <name type="scientific">Butyrivibrio fibrisolvens</name>
    <dbReference type="NCBI Taxonomy" id="831"/>
    <lineage>
        <taxon>Bacteria</taxon>
        <taxon>Bacillati</taxon>
        <taxon>Bacillota</taxon>
        <taxon>Clostridia</taxon>
        <taxon>Lachnospirales</taxon>
        <taxon>Lachnospiraceae</taxon>
        <taxon>Butyrivibrio</taxon>
    </lineage>
</organism>
<dbReference type="EMBL" id="AJ222769">
    <property type="protein sequence ID" value="CAA10975.1"/>
    <property type="molecule type" value="Genomic_DNA"/>
</dbReference>
<dbReference type="RefSeq" id="WP_002586627.1">
    <property type="nucleotide sequence ID" value="NG_048281.1"/>
</dbReference>
<dbReference type="SMR" id="O52836"/>
<dbReference type="CARD" id="ARO:3000194">
    <property type="molecule name" value="tet(W)"/>
    <property type="mechanism identifier" value="ARO:0001003"/>
    <property type="mechanism name" value="antibiotic target protection"/>
</dbReference>
<dbReference type="GeneID" id="97191377"/>
<dbReference type="KEGG" id="ag:CAA10975"/>
<dbReference type="GO" id="GO:0005525">
    <property type="term" value="F:GTP binding"/>
    <property type="evidence" value="ECO:0007669"/>
    <property type="project" value="UniProtKB-KW"/>
</dbReference>
<dbReference type="GO" id="GO:0003924">
    <property type="term" value="F:GTPase activity"/>
    <property type="evidence" value="ECO:0007669"/>
    <property type="project" value="InterPro"/>
</dbReference>
<dbReference type="GO" id="GO:0046677">
    <property type="term" value="P:response to antibiotic"/>
    <property type="evidence" value="ECO:0007669"/>
    <property type="project" value="UniProtKB-KW"/>
</dbReference>
<dbReference type="GO" id="GO:0032790">
    <property type="term" value="P:ribosome disassembly"/>
    <property type="evidence" value="ECO:0007669"/>
    <property type="project" value="TreeGrafter"/>
</dbReference>
<dbReference type="GO" id="GO:0006412">
    <property type="term" value="P:translation"/>
    <property type="evidence" value="ECO:0007669"/>
    <property type="project" value="UniProtKB-KW"/>
</dbReference>
<dbReference type="CDD" id="cd03711">
    <property type="entry name" value="Tet_C"/>
    <property type="match status" value="1"/>
</dbReference>
<dbReference type="CDD" id="cd03690">
    <property type="entry name" value="Tet_II"/>
    <property type="match status" value="1"/>
</dbReference>
<dbReference type="CDD" id="cd16258">
    <property type="entry name" value="Tet_III"/>
    <property type="match status" value="1"/>
</dbReference>
<dbReference type="CDD" id="cd01684">
    <property type="entry name" value="Tet_like_IV"/>
    <property type="match status" value="1"/>
</dbReference>
<dbReference type="CDD" id="cd04168">
    <property type="entry name" value="TetM_like"/>
    <property type="match status" value="1"/>
</dbReference>
<dbReference type="Gene3D" id="3.30.230.10">
    <property type="match status" value="1"/>
</dbReference>
<dbReference type="Gene3D" id="3.30.70.240">
    <property type="match status" value="1"/>
</dbReference>
<dbReference type="Gene3D" id="3.30.70.870">
    <property type="entry name" value="Elongation Factor G (Translational Gtpase), domain 3"/>
    <property type="match status" value="1"/>
</dbReference>
<dbReference type="Gene3D" id="3.40.50.300">
    <property type="entry name" value="P-loop containing nucleotide triphosphate hydrolases"/>
    <property type="match status" value="1"/>
</dbReference>
<dbReference type="Gene3D" id="2.40.30.10">
    <property type="entry name" value="Translation factors"/>
    <property type="match status" value="1"/>
</dbReference>
<dbReference type="InterPro" id="IPR041095">
    <property type="entry name" value="EFG_II"/>
</dbReference>
<dbReference type="InterPro" id="IPR035647">
    <property type="entry name" value="EFG_III/V"/>
</dbReference>
<dbReference type="InterPro" id="IPR000640">
    <property type="entry name" value="EFG_V-like"/>
</dbReference>
<dbReference type="InterPro" id="IPR031157">
    <property type="entry name" value="G_TR_CS"/>
</dbReference>
<dbReference type="InterPro" id="IPR027417">
    <property type="entry name" value="P-loop_NTPase"/>
</dbReference>
<dbReference type="InterPro" id="IPR020568">
    <property type="entry name" value="Ribosomal_Su5_D2-typ_SF"/>
</dbReference>
<dbReference type="InterPro" id="IPR014721">
    <property type="entry name" value="Ribsml_uS5_D2-typ_fold_subgr"/>
</dbReference>
<dbReference type="InterPro" id="IPR005225">
    <property type="entry name" value="Small_GTP-bd"/>
</dbReference>
<dbReference type="InterPro" id="IPR000795">
    <property type="entry name" value="T_Tr_GTP-bd_dom"/>
</dbReference>
<dbReference type="InterPro" id="IPR035650">
    <property type="entry name" value="Tet_C"/>
</dbReference>
<dbReference type="InterPro" id="IPR009000">
    <property type="entry name" value="Transl_B-barrel_sf"/>
</dbReference>
<dbReference type="InterPro" id="IPR005517">
    <property type="entry name" value="Transl_elong_EFG/EF2_IV"/>
</dbReference>
<dbReference type="NCBIfam" id="TIGR00231">
    <property type="entry name" value="small_GTP"/>
    <property type="match status" value="1"/>
</dbReference>
<dbReference type="NCBIfam" id="NF012153">
    <property type="entry name" value="tet_protect"/>
    <property type="match status" value="1"/>
</dbReference>
<dbReference type="NCBIfam" id="NF033148">
    <property type="entry name" value="tet_protect_M_W"/>
    <property type="match status" value="1"/>
</dbReference>
<dbReference type="PANTHER" id="PTHR43261:SF1">
    <property type="entry name" value="RIBOSOME-RELEASING FACTOR 2, MITOCHONDRIAL"/>
    <property type="match status" value="1"/>
</dbReference>
<dbReference type="PANTHER" id="PTHR43261">
    <property type="entry name" value="TRANSLATION ELONGATION FACTOR G-RELATED"/>
    <property type="match status" value="1"/>
</dbReference>
<dbReference type="Pfam" id="PF00679">
    <property type="entry name" value="EFG_C"/>
    <property type="match status" value="1"/>
</dbReference>
<dbReference type="Pfam" id="PF14492">
    <property type="entry name" value="EFG_III"/>
    <property type="match status" value="1"/>
</dbReference>
<dbReference type="Pfam" id="PF03764">
    <property type="entry name" value="EFG_IV"/>
    <property type="match status" value="1"/>
</dbReference>
<dbReference type="Pfam" id="PF00009">
    <property type="entry name" value="GTP_EFTU"/>
    <property type="match status" value="1"/>
</dbReference>
<dbReference type="PRINTS" id="PR00315">
    <property type="entry name" value="ELONGATNFCT"/>
</dbReference>
<dbReference type="PRINTS" id="PR01037">
    <property type="entry name" value="TCRTETOQM"/>
</dbReference>
<dbReference type="SMART" id="SM00889">
    <property type="entry name" value="EFG_IV"/>
    <property type="match status" value="1"/>
</dbReference>
<dbReference type="SUPFAM" id="SSF54980">
    <property type="entry name" value="EF-G C-terminal domain-like"/>
    <property type="match status" value="2"/>
</dbReference>
<dbReference type="SUPFAM" id="SSF52540">
    <property type="entry name" value="P-loop containing nucleoside triphosphate hydrolases"/>
    <property type="match status" value="1"/>
</dbReference>
<dbReference type="SUPFAM" id="SSF54211">
    <property type="entry name" value="Ribosomal protein S5 domain 2-like"/>
    <property type="match status" value="1"/>
</dbReference>
<dbReference type="SUPFAM" id="SSF50447">
    <property type="entry name" value="Translation proteins"/>
    <property type="match status" value="1"/>
</dbReference>
<dbReference type="PROSITE" id="PS00301">
    <property type="entry name" value="G_TR_1"/>
    <property type="match status" value="1"/>
</dbReference>
<dbReference type="PROSITE" id="PS51722">
    <property type="entry name" value="G_TR_2"/>
    <property type="match status" value="1"/>
</dbReference>
<proteinExistence type="inferred from homology"/>
<reference key="1">
    <citation type="journal article" date="1997" name="Appl. Environ. Microbiol.">
        <title>High-frequency transfer of a naturally occurring chromosomal tetracycline resistance element in the ruminal anaerobe Butyrivibrio fibrisolvens.</title>
        <authorList>
            <person name="Scott K.P."/>
            <person name="Barbosa T.M."/>
            <person name="Forbes K.J."/>
            <person name="Flint H.J."/>
        </authorList>
    </citation>
    <scope>NUCLEOTIDE SEQUENCE [GENOMIC DNA]</scope>
    <source>
        <strain>1.230</strain>
    </source>
</reference>
<gene>
    <name type="primary">tetW</name>
    <name type="synonym">tet(W)</name>
</gene>
<evidence type="ECO:0000250" key="1"/>
<evidence type="ECO:0000255" key="2">
    <source>
        <dbReference type="PROSITE-ProRule" id="PRU01059"/>
    </source>
</evidence>